<accession>P0CF44</accession>
<accession>O07989</accession>
<accession>O08018</accession>
<accession>O08019</accession>
<accession>P0C5W2</accession>
<accession>P19776</accession>
<accession>P76357</accession>
<accession>P77346</accession>
<accession>Q2MBI5</accession>
<accession>Q2MC65</accession>
<accession>Q79BJ2</accession>
<accession>Q9JMT0</accession>
<feature type="chain" id="PRO_0000393452" description="Transposase InsC for insertion element IS2I">
    <location>
        <begin position="1"/>
        <end position="121"/>
    </location>
</feature>
<comment type="function">
    <text>Involved in the transposition of the insertion sequence IS2.</text>
</comment>
<comment type="similarity">
    <text evidence="1">Belongs to the transposase 8 family.</text>
</comment>
<comment type="sequence caution" evidence="1">
    <conflict type="erroneous initiation">
        <sequence resource="EMBL-CDS" id="AAA69212"/>
    </conflict>
    <text>Extended N-terminus.</text>
</comment>
<comment type="sequence caution" evidence="1">
    <conflict type="erroneous initiation">
        <sequence resource="EMBL-CDS" id="BAE77100"/>
    </conflict>
    <text>Extended N-terminus.</text>
</comment>
<name>INSC5_ECOLI</name>
<dbReference type="EMBL" id="U28377">
    <property type="protein sequence ID" value="AAA69212.1"/>
    <property type="status" value="ALT_INIT"/>
    <property type="molecule type" value="Genomic_DNA"/>
</dbReference>
<dbReference type="EMBL" id="U00096">
    <property type="protein sequence ID" value="AAC76080.3"/>
    <property type="molecule type" value="Genomic_DNA"/>
</dbReference>
<dbReference type="EMBL" id="AP009048">
    <property type="protein sequence ID" value="BAE77100.1"/>
    <property type="status" value="ALT_INIT"/>
    <property type="molecule type" value="Genomic_DNA"/>
</dbReference>
<dbReference type="PIR" id="B65240">
    <property type="entry name" value="B65240"/>
</dbReference>
<dbReference type="RefSeq" id="NP_417516.3">
    <property type="nucleotide sequence ID" value="NC_000913.3"/>
</dbReference>
<dbReference type="SMR" id="P0CF44"/>
<dbReference type="FunCoup" id="P0CF44">
    <property type="interactions" value="57"/>
</dbReference>
<dbReference type="jPOST" id="P0CF44"/>
<dbReference type="EnsemblBacteria" id="AAC76080">
    <property type="protein sequence ID" value="AAC76080"/>
    <property type="gene ID" value="b3044"/>
</dbReference>
<dbReference type="GeneID" id="947520"/>
<dbReference type="KEGG" id="ecj:JW3012"/>
<dbReference type="KEGG" id="eco:b0360"/>
<dbReference type="KEGG" id="eco:b1403"/>
<dbReference type="KEGG" id="eco:b1997"/>
<dbReference type="KEGG" id="eco:b2861"/>
<dbReference type="KEGG" id="eco:b3044"/>
<dbReference type="KEGG" id="eco:b4272"/>
<dbReference type="KEGG" id="ecoc:C3026_00670"/>
<dbReference type="KEGG" id="ecoc:C3026_03840"/>
<dbReference type="KEGG" id="ecoc:C3026_06235"/>
<dbReference type="KEGG" id="ecoc:C3026_08180"/>
<dbReference type="KEGG" id="ecoc:C3026_09100"/>
<dbReference type="KEGG" id="ecoc:C3026_11265"/>
<dbReference type="KEGG" id="ecoc:C3026_15305"/>
<dbReference type="KEGG" id="ecoc:C3026_15700"/>
<dbReference type="KEGG" id="ecoc:C3026_16625"/>
<dbReference type="KEGG" id="ecoc:C3026_20340"/>
<dbReference type="KEGG" id="ecoc:C3026_23040"/>
<dbReference type="KEGG" id="ecoc:C3026_24220"/>
<dbReference type="EchoBASE" id="EB4740"/>
<dbReference type="HOGENOM" id="CLU_027402_25_0_6"/>
<dbReference type="InParanoid" id="P0CF44"/>
<dbReference type="PhylomeDB" id="P0CF44"/>
<dbReference type="BioCyc" id="EcoCyc:MONOMER0-4253"/>
<dbReference type="PRO" id="PR:P0CF44"/>
<dbReference type="Proteomes" id="UP000000625">
    <property type="component" value="Chromosome"/>
</dbReference>
<dbReference type="GO" id="GO:0003677">
    <property type="term" value="F:DNA binding"/>
    <property type="evidence" value="ECO:0007669"/>
    <property type="project" value="UniProtKB-KW"/>
</dbReference>
<dbReference type="GO" id="GO:0004803">
    <property type="term" value="F:transposase activity"/>
    <property type="evidence" value="ECO:0007669"/>
    <property type="project" value="InterPro"/>
</dbReference>
<dbReference type="GO" id="GO:0006313">
    <property type="term" value="P:DNA transposition"/>
    <property type="evidence" value="ECO:0007669"/>
    <property type="project" value="InterPro"/>
</dbReference>
<dbReference type="Gene3D" id="1.10.10.10">
    <property type="entry name" value="Winged helix-like DNA-binding domain superfamily/Winged helix DNA-binding domain"/>
    <property type="match status" value="1"/>
</dbReference>
<dbReference type="InterPro" id="IPR009057">
    <property type="entry name" value="Homeodomain-like_sf"/>
</dbReference>
<dbReference type="InterPro" id="IPR002514">
    <property type="entry name" value="Transposase_8"/>
</dbReference>
<dbReference type="InterPro" id="IPR036388">
    <property type="entry name" value="WH-like_DNA-bd_sf"/>
</dbReference>
<dbReference type="NCBIfam" id="NF006928">
    <property type="entry name" value="PRK09413.1"/>
    <property type="match status" value="1"/>
</dbReference>
<dbReference type="PANTHER" id="PTHR37936">
    <property type="entry name" value="TRANSPOSASE INSC FOR INSERTION ELEMENT IS2A-RELATED"/>
    <property type="match status" value="1"/>
</dbReference>
<dbReference type="PANTHER" id="PTHR37936:SF3">
    <property type="entry name" value="TRANSPOSASE INSC FOR INSERTION ELEMENT IS2A-RELATED"/>
    <property type="match status" value="1"/>
</dbReference>
<dbReference type="Pfam" id="PF01527">
    <property type="entry name" value="HTH_Tnp_1"/>
    <property type="match status" value="1"/>
</dbReference>
<dbReference type="SUPFAM" id="SSF46689">
    <property type="entry name" value="Homeodomain-like"/>
    <property type="match status" value="1"/>
</dbReference>
<proteinExistence type="inferred from homology"/>
<evidence type="ECO:0000305" key="1"/>
<sequence length="121" mass="13452">MIDVLGPEKRRRRTTQEKIAIVQQSFEPGMTVSLVARQHGVAASQLFLWRKQYQEGSLTAVAAGEQVVPASELAAAMKQIKELQRLLGKKTMENELLKEAVEYGRAKKWIAHAPLLPGDGE</sequence>
<reference key="1">
    <citation type="journal article" date="1997" name="Science">
        <title>The complete genome sequence of Escherichia coli K-12.</title>
        <authorList>
            <person name="Blattner F.R."/>
            <person name="Plunkett G. III"/>
            <person name="Bloch C.A."/>
            <person name="Perna N.T."/>
            <person name="Burland V."/>
            <person name="Riley M."/>
            <person name="Collado-Vides J."/>
            <person name="Glasner J.D."/>
            <person name="Rode C.K."/>
            <person name="Mayhew G.F."/>
            <person name="Gregor J."/>
            <person name="Davis N.W."/>
            <person name="Kirkpatrick H.A."/>
            <person name="Goeden M.A."/>
            <person name="Rose D.J."/>
            <person name="Mau B."/>
            <person name="Shao Y."/>
        </authorList>
    </citation>
    <scope>NUCLEOTIDE SEQUENCE [LARGE SCALE GENOMIC DNA]</scope>
    <source>
        <strain>K12 / MG1655 / ATCC 47076</strain>
    </source>
</reference>
<reference key="2">
    <citation type="journal article" date="2006" name="Mol. Syst. Biol.">
        <title>Highly accurate genome sequences of Escherichia coli K-12 strains MG1655 and W3110.</title>
        <authorList>
            <person name="Hayashi K."/>
            <person name="Morooka N."/>
            <person name="Yamamoto Y."/>
            <person name="Fujita K."/>
            <person name="Isono K."/>
            <person name="Choi S."/>
            <person name="Ohtsubo E."/>
            <person name="Baba T."/>
            <person name="Wanner B.L."/>
            <person name="Mori H."/>
            <person name="Horiuchi T."/>
        </authorList>
    </citation>
    <scope>NUCLEOTIDE SEQUENCE [LARGE SCALE GENOMIC DNA]</scope>
    <source>
        <strain>K12 / W3110 / ATCC 27325 / DSM 5911</strain>
    </source>
</reference>
<organism>
    <name type="scientific">Escherichia coli (strain K12)</name>
    <dbReference type="NCBI Taxonomy" id="83333"/>
    <lineage>
        <taxon>Bacteria</taxon>
        <taxon>Pseudomonadati</taxon>
        <taxon>Pseudomonadota</taxon>
        <taxon>Gammaproteobacteria</taxon>
        <taxon>Enterobacterales</taxon>
        <taxon>Enterobacteriaceae</taxon>
        <taxon>Escherichia</taxon>
    </lineage>
</organism>
<protein>
    <recommendedName>
        <fullName>Transposase InsC for insertion element IS2I</fullName>
    </recommendedName>
</protein>
<gene>
    <name type="primary">insC5</name>
    <name type="ordered locus">b3044</name>
    <name type="ordered locus">JW3012</name>
</gene>
<keyword id="KW-0233">DNA recombination</keyword>
<keyword id="KW-0238">DNA-binding</keyword>
<keyword id="KW-1185">Reference proteome</keyword>
<keyword id="KW-0814">Transposable element</keyword>
<keyword id="KW-0815">Transposition</keyword>